<accession>Q2FHQ4</accession>
<organism>
    <name type="scientific">Staphylococcus aureus (strain USA300)</name>
    <dbReference type="NCBI Taxonomy" id="367830"/>
    <lineage>
        <taxon>Bacteria</taxon>
        <taxon>Bacillati</taxon>
        <taxon>Bacillota</taxon>
        <taxon>Bacilli</taxon>
        <taxon>Bacillales</taxon>
        <taxon>Staphylococcaceae</taxon>
        <taxon>Staphylococcus</taxon>
    </lineage>
</organism>
<sequence length="449" mass="49844">MLNYTGLENKNVLVVGLAKSGYEAAKLLSKLGANVTVNDGKDLSQDAHAKDLESMGISVVSGSHPLTLLDNNPIIVKNPGIPYTVSIIDEAVKRGLKILTEVELSYLISEAPIIAVTGTNGKTTVTSLIGDMFKKSRLTGRLSGNIGYVASKVAQEVKPTDYLVTELSSFQLLGIEKYKPHIAIITNIYSAHLDYHENLENYQNAKKQIYKNQTEEDYLICNYHQRQVIESEELKAKTLYFSTQQEVDGIYIKDGFIVYKGVRIINTEDLVLPGEHNLENILAAVLACILAGVPIKAIIDSLTTFSGIEHRLQYVGTNRTNKYYNDSKATNTLATQFALNSFNQPIIWLCGGLDRGNEFDELIPYMENVRAMVVFGQTKAKFAKLGNSQGKSVIEANNVEDAVDKVQDIIEPNDVVLLSPACASWDQYSTFEERGEKFIERFRAHLPSY</sequence>
<gene>
    <name evidence="1" type="primary">murD</name>
    <name type="ordered locus">SAUSA300_1077</name>
</gene>
<name>MURD_STAA3</name>
<evidence type="ECO:0000255" key="1">
    <source>
        <dbReference type="HAMAP-Rule" id="MF_00639"/>
    </source>
</evidence>
<comment type="function">
    <text evidence="1">Cell wall formation. Catalyzes the addition of glutamate to the nucleotide precursor UDP-N-acetylmuramoyl-L-alanine (UMA).</text>
</comment>
<comment type="catalytic activity">
    <reaction evidence="1">
        <text>UDP-N-acetyl-alpha-D-muramoyl-L-alanine + D-glutamate + ATP = UDP-N-acetyl-alpha-D-muramoyl-L-alanyl-D-glutamate + ADP + phosphate + H(+)</text>
        <dbReference type="Rhea" id="RHEA:16429"/>
        <dbReference type="ChEBI" id="CHEBI:15378"/>
        <dbReference type="ChEBI" id="CHEBI:29986"/>
        <dbReference type="ChEBI" id="CHEBI:30616"/>
        <dbReference type="ChEBI" id="CHEBI:43474"/>
        <dbReference type="ChEBI" id="CHEBI:83898"/>
        <dbReference type="ChEBI" id="CHEBI:83900"/>
        <dbReference type="ChEBI" id="CHEBI:456216"/>
        <dbReference type="EC" id="6.3.2.9"/>
    </reaction>
</comment>
<comment type="pathway">
    <text evidence="1">Cell wall biogenesis; peptidoglycan biosynthesis.</text>
</comment>
<comment type="subcellular location">
    <subcellularLocation>
        <location evidence="1">Cytoplasm</location>
    </subcellularLocation>
</comment>
<comment type="similarity">
    <text evidence="1">Belongs to the MurCDEF family.</text>
</comment>
<reference key="1">
    <citation type="journal article" date="2006" name="Lancet">
        <title>Complete genome sequence of USA300, an epidemic clone of community-acquired meticillin-resistant Staphylococcus aureus.</title>
        <authorList>
            <person name="Diep B.A."/>
            <person name="Gill S.R."/>
            <person name="Chang R.F."/>
            <person name="Phan T.H."/>
            <person name="Chen J.H."/>
            <person name="Davidson M.G."/>
            <person name="Lin F."/>
            <person name="Lin J."/>
            <person name="Carleton H.A."/>
            <person name="Mongodin E.F."/>
            <person name="Sensabaugh G.F."/>
            <person name="Perdreau-Remington F."/>
        </authorList>
    </citation>
    <scope>NUCLEOTIDE SEQUENCE [LARGE SCALE GENOMIC DNA]</scope>
    <source>
        <strain>USA300</strain>
    </source>
</reference>
<feature type="chain" id="PRO_0000257244" description="UDP-N-acetylmuramoylalanine--D-glutamate ligase">
    <location>
        <begin position="1"/>
        <end position="449"/>
    </location>
</feature>
<feature type="binding site" evidence="1">
    <location>
        <begin position="118"/>
        <end position="124"/>
    </location>
    <ligand>
        <name>ATP</name>
        <dbReference type="ChEBI" id="CHEBI:30616"/>
    </ligand>
</feature>
<keyword id="KW-0067">ATP-binding</keyword>
<keyword id="KW-0131">Cell cycle</keyword>
<keyword id="KW-0132">Cell division</keyword>
<keyword id="KW-0133">Cell shape</keyword>
<keyword id="KW-0961">Cell wall biogenesis/degradation</keyword>
<keyword id="KW-0963">Cytoplasm</keyword>
<keyword id="KW-0436">Ligase</keyword>
<keyword id="KW-0547">Nucleotide-binding</keyword>
<keyword id="KW-0573">Peptidoglycan synthesis</keyword>
<dbReference type="EC" id="6.3.2.9" evidence="1"/>
<dbReference type="EMBL" id="CP000255">
    <property type="protein sequence ID" value="ABD21353.1"/>
    <property type="molecule type" value="Genomic_DNA"/>
</dbReference>
<dbReference type="RefSeq" id="WP_000935991.1">
    <property type="nucleotide sequence ID" value="NZ_CP027476.1"/>
</dbReference>
<dbReference type="SMR" id="Q2FHQ4"/>
<dbReference type="KEGG" id="saa:SAUSA300_1077"/>
<dbReference type="HOGENOM" id="CLU_032540_0_1_9"/>
<dbReference type="OMA" id="CSSFDMF"/>
<dbReference type="UniPathway" id="UPA00219"/>
<dbReference type="Proteomes" id="UP000001939">
    <property type="component" value="Chromosome"/>
</dbReference>
<dbReference type="GO" id="GO:0005737">
    <property type="term" value="C:cytoplasm"/>
    <property type="evidence" value="ECO:0007669"/>
    <property type="project" value="UniProtKB-SubCell"/>
</dbReference>
<dbReference type="GO" id="GO:0005524">
    <property type="term" value="F:ATP binding"/>
    <property type="evidence" value="ECO:0007669"/>
    <property type="project" value="UniProtKB-UniRule"/>
</dbReference>
<dbReference type="GO" id="GO:0008764">
    <property type="term" value="F:UDP-N-acetylmuramoylalanine-D-glutamate ligase activity"/>
    <property type="evidence" value="ECO:0007669"/>
    <property type="project" value="UniProtKB-UniRule"/>
</dbReference>
<dbReference type="GO" id="GO:0051301">
    <property type="term" value="P:cell division"/>
    <property type="evidence" value="ECO:0007669"/>
    <property type="project" value="UniProtKB-KW"/>
</dbReference>
<dbReference type="GO" id="GO:0071555">
    <property type="term" value="P:cell wall organization"/>
    <property type="evidence" value="ECO:0007669"/>
    <property type="project" value="UniProtKB-KW"/>
</dbReference>
<dbReference type="GO" id="GO:0009252">
    <property type="term" value="P:peptidoglycan biosynthetic process"/>
    <property type="evidence" value="ECO:0007669"/>
    <property type="project" value="UniProtKB-UniRule"/>
</dbReference>
<dbReference type="GO" id="GO:0008360">
    <property type="term" value="P:regulation of cell shape"/>
    <property type="evidence" value="ECO:0007669"/>
    <property type="project" value="UniProtKB-KW"/>
</dbReference>
<dbReference type="Gene3D" id="3.90.190.20">
    <property type="entry name" value="Mur ligase, C-terminal domain"/>
    <property type="match status" value="1"/>
</dbReference>
<dbReference type="Gene3D" id="3.40.1190.10">
    <property type="entry name" value="Mur-like, catalytic domain"/>
    <property type="match status" value="1"/>
</dbReference>
<dbReference type="Gene3D" id="3.40.50.720">
    <property type="entry name" value="NAD(P)-binding Rossmann-like Domain"/>
    <property type="match status" value="1"/>
</dbReference>
<dbReference type="HAMAP" id="MF_00639">
    <property type="entry name" value="MurD"/>
    <property type="match status" value="1"/>
</dbReference>
<dbReference type="InterPro" id="IPR036565">
    <property type="entry name" value="Mur-like_cat_sf"/>
</dbReference>
<dbReference type="InterPro" id="IPR004101">
    <property type="entry name" value="Mur_ligase_C"/>
</dbReference>
<dbReference type="InterPro" id="IPR036615">
    <property type="entry name" value="Mur_ligase_C_dom_sf"/>
</dbReference>
<dbReference type="InterPro" id="IPR013221">
    <property type="entry name" value="Mur_ligase_cen"/>
</dbReference>
<dbReference type="InterPro" id="IPR005762">
    <property type="entry name" value="MurD"/>
</dbReference>
<dbReference type="NCBIfam" id="TIGR01087">
    <property type="entry name" value="murD"/>
    <property type="match status" value="1"/>
</dbReference>
<dbReference type="PANTHER" id="PTHR43692">
    <property type="entry name" value="UDP-N-ACETYLMURAMOYLALANINE--D-GLUTAMATE LIGASE"/>
    <property type="match status" value="1"/>
</dbReference>
<dbReference type="PANTHER" id="PTHR43692:SF1">
    <property type="entry name" value="UDP-N-ACETYLMURAMOYLALANINE--D-GLUTAMATE LIGASE"/>
    <property type="match status" value="1"/>
</dbReference>
<dbReference type="Pfam" id="PF02875">
    <property type="entry name" value="Mur_ligase_C"/>
    <property type="match status" value="1"/>
</dbReference>
<dbReference type="Pfam" id="PF08245">
    <property type="entry name" value="Mur_ligase_M"/>
    <property type="match status" value="1"/>
</dbReference>
<dbReference type="Pfam" id="PF21799">
    <property type="entry name" value="MurD-like_N"/>
    <property type="match status" value="1"/>
</dbReference>
<dbReference type="SUPFAM" id="SSF51984">
    <property type="entry name" value="MurCD N-terminal domain"/>
    <property type="match status" value="1"/>
</dbReference>
<dbReference type="SUPFAM" id="SSF53623">
    <property type="entry name" value="MurD-like peptide ligases, catalytic domain"/>
    <property type="match status" value="1"/>
</dbReference>
<dbReference type="SUPFAM" id="SSF53244">
    <property type="entry name" value="MurD-like peptide ligases, peptide-binding domain"/>
    <property type="match status" value="1"/>
</dbReference>
<protein>
    <recommendedName>
        <fullName evidence="1">UDP-N-acetylmuramoylalanine--D-glutamate ligase</fullName>
        <ecNumber evidence="1">6.3.2.9</ecNumber>
    </recommendedName>
    <alternativeName>
        <fullName evidence="1">D-glutamic acid-adding enzyme</fullName>
    </alternativeName>
    <alternativeName>
        <fullName evidence="1">UDP-N-acetylmuramoyl-L-alanyl-D-glutamate synthetase</fullName>
    </alternativeName>
</protein>
<proteinExistence type="inferred from homology"/>